<keyword id="KW-0547">Nucleotide-binding</keyword>
<keyword id="KW-1185">Reference proteome</keyword>
<dbReference type="EMBL" id="AE017143">
    <property type="protein sequence ID" value="AAP95329.1"/>
    <property type="molecule type" value="Genomic_DNA"/>
</dbReference>
<dbReference type="RefSeq" id="WP_010944382.1">
    <property type="nucleotide sequence ID" value="NC_002940.2"/>
</dbReference>
<dbReference type="SMR" id="Q7VNW8"/>
<dbReference type="STRING" id="233412.HD_0358"/>
<dbReference type="KEGG" id="hdu:HD_0358"/>
<dbReference type="eggNOG" id="COG1666">
    <property type="taxonomic scope" value="Bacteria"/>
</dbReference>
<dbReference type="HOGENOM" id="CLU_099839_1_0_6"/>
<dbReference type="OrthoDB" id="9801447at2"/>
<dbReference type="Proteomes" id="UP000001022">
    <property type="component" value="Chromosome"/>
</dbReference>
<dbReference type="GO" id="GO:0005829">
    <property type="term" value="C:cytosol"/>
    <property type="evidence" value="ECO:0007669"/>
    <property type="project" value="TreeGrafter"/>
</dbReference>
<dbReference type="GO" id="GO:0000166">
    <property type="term" value="F:nucleotide binding"/>
    <property type="evidence" value="ECO:0007669"/>
    <property type="project" value="TreeGrafter"/>
</dbReference>
<dbReference type="CDD" id="cd11740">
    <property type="entry name" value="YajQ_like"/>
    <property type="match status" value="1"/>
</dbReference>
<dbReference type="FunFam" id="3.30.70.860:FF:000001">
    <property type="entry name" value="UPF0234 protein YajQ"/>
    <property type="match status" value="1"/>
</dbReference>
<dbReference type="FunFam" id="3.30.70.990:FF:000001">
    <property type="entry name" value="UPF0234 protein YajQ"/>
    <property type="match status" value="1"/>
</dbReference>
<dbReference type="Gene3D" id="3.30.70.860">
    <property type="match status" value="1"/>
</dbReference>
<dbReference type="Gene3D" id="3.30.70.990">
    <property type="entry name" value="YajQ-like, domain 2"/>
    <property type="match status" value="1"/>
</dbReference>
<dbReference type="HAMAP" id="MF_00632">
    <property type="entry name" value="YajQ"/>
    <property type="match status" value="1"/>
</dbReference>
<dbReference type="InterPro" id="IPR007551">
    <property type="entry name" value="DUF520"/>
</dbReference>
<dbReference type="InterPro" id="IPR035571">
    <property type="entry name" value="UPF0234-like_C"/>
</dbReference>
<dbReference type="InterPro" id="IPR035570">
    <property type="entry name" value="UPF0234_N"/>
</dbReference>
<dbReference type="InterPro" id="IPR036183">
    <property type="entry name" value="YajQ-like_sf"/>
</dbReference>
<dbReference type="NCBIfam" id="NF003819">
    <property type="entry name" value="PRK05412.1"/>
    <property type="match status" value="1"/>
</dbReference>
<dbReference type="PANTHER" id="PTHR30476">
    <property type="entry name" value="UPF0234 PROTEIN YAJQ"/>
    <property type="match status" value="1"/>
</dbReference>
<dbReference type="PANTHER" id="PTHR30476:SF0">
    <property type="entry name" value="UPF0234 PROTEIN YAJQ"/>
    <property type="match status" value="1"/>
</dbReference>
<dbReference type="Pfam" id="PF04461">
    <property type="entry name" value="DUF520"/>
    <property type="match status" value="1"/>
</dbReference>
<dbReference type="SUPFAM" id="SSF89963">
    <property type="entry name" value="YajQ-like"/>
    <property type="match status" value="2"/>
</dbReference>
<name>Y358_HAEDU</name>
<gene>
    <name type="ordered locus">HD_0358</name>
</gene>
<comment type="function">
    <text evidence="1">Nucleotide-binding protein.</text>
</comment>
<comment type="similarity">
    <text evidence="1">Belongs to the YajQ family.</text>
</comment>
<reference key="1">
    <citation type="submission" date="2003-06" db="EMBL/GenBank/DDBJ databases">
        <title>The complete genome sequence of Haemophilus ducreyi.</title>
        <authorList>
            <person name="Munson R.S. Jr."/>
            <person name="Ray W.C."/>
            <person name="Mahairas G."/>
            <person name="Sabo P."/>
            <person name="Mungur R."/>
            <person name="Johnson L."/>
            <person name="Nguyen D."/>
            <person name="Wang J."/>
            <person name="Forst C."/>
            <person name="Hood L."/>
        </authorList>
    </citation>
    <scope>NUCLEOTIDE SEQUENCE [LARGE SCALE GENOMIC DNA]</scope>
    <source>
        <strain>35000HP / ATCC 700724</strain>
    </source>
</reference>
<protein>
    <recommendedName>
        <fullName evidence="1">Nucleotide-binding protein HD_0358</fullName>
    </recommendedName>
</protein>
<sequence>MPSFDIVSEITLHEVRNAVENANRVLTTRYDFRGVEAIIELNEKNESIKLTTESEFQLEQLIEMLISACVKRGIEHSSLDIPTDAEHHGKLYSKEIKLKQGIETEIAKKITKLIKDAKIKVQTQIQGDQVRVTGKSRDDLQATIQLIKTAELGQPFQFNNFRD</sequence>
<accession>Q7VNW8</accession>
<feature type="chain" id="PRO_0000106184" description="Nucleotide-binding protein HD_0358">
    <location>
        <begin position="1"/>
        <end position="163"/>
    </location>
</feature>
<evidence type="ECO:0000255" key="1">
    <source>
        <dbReference type="HAMAP-Rule" id="MF_00632"/>
    </source>
</evidence>
<proteinExistence type="inferred from homology"/>
<organism>
    <name type="scientific">Haemophilus ducreyi (strain 35000HP / ATCC 700724)</name>
    <dbReference type="NCBI Taxonomy" id="233412"/>
    <lineage>
        <taxon>Bacteria</taxon>
        <taxon>Pseudomonadati</taxon>
        <taxon>Pseudomonadota</taxon>
        <taxon>Gammaproteobacteria</taxon>
        <taxon>Pasteurellales</taxon>
        <taxon>Pasteurellaceae</taxon>
        <taxon>Haemophilus</taxon>
    </lineage>
</organism>